<feature type="chain" id="PRO_0000158726" description="Adenylate kinase">
    <location>
        <begin position="1"/>
        <end position="216"/>
    </location>
</feature>
<feature type="region of interest" description="NMP" evidence="1">
    <location>
        <begin position="30"/>
        <end position="59"/>
    </location>
</feature>
<feature type="region of interest" description="LID" evidence="1">
    <location>
        <begin position="126"/>
        <end position="163"/>
    </location>
</feature>
<feature type="binding site" evidence="1">
    <location>
        <begin position="10"/>
        <end position="15"/>
    </location>
    <ligand>
        <name>ATP</name>
        <dbReference type="ChEBI" id="CHEBI:30616"/>
    </ligand>
</feature>
<feature type="binding site" evidence="1">
    <location>
        <position position="31"/>
    </location>
    <ligand>
        <name>AMP</name>
        <dbReference type="ChEBI" id="CHEBI:456215"/>
    </ligand>
</feature>
<feature type="binding site" evidence="1">
    <location>
        <position position="36"/>
    </location>
    <ligand>
        <name>AMP</name>
        <dbReference type="ChEBI" id="CHEBI:456215"/>
    </ligand>
</feature>
<feature type="binding site" evidence="1">
    <location>
        <begin position="57"/>
        <end position="59"/>
    </location>
    <ligand>
        <name>AMP</name>
        <dbReference type="ChEBI" id="CHEBI:456215"/>
    </ligand>
</feature>
<feature type="binding site" evidence="1">
    <location>
        <begin position="85"/>
        <end position="88"/>
    </location>
    <ligand>
        <name>AMP</name>
        <dbReference type="ChEBI" id="CHEBI:456215"/>
    </ligand>
</feature>
<feature type="binding site" evidence="1">
    <location>
        <position position="92"/>
    </location>
    <ligand>
        <name>AMP</name>
        <dbReference type="ChEBI" id="CHEBI:456215"/>
    </ligand>
</feature>
<feature type="binding site" evidence="1">
    <location>
        <position position="127"/>
    </location>
    <ligand>
        <name>ATP</name>
        <dbReference type="ChEBI" id="CHEBI:30616"/>
    </ligand>
</feature>
<feature type="binding site" evidence="1">
    <location>
        <position position="130"/>
    </location>
    <ligand>
        <name>Zn(2+)</name>
        <dbReference type="ChEBI" id="CHEBI:29105"/>
        <note>structural</note>
    </ligand>
</feature>
<feature type="binding site" evidence="1">
    <location>
        <position position="133"/>
    </location>
    <ligand>
        <name>Zn(2+)</name>
        <dbReference type="ChEBI" id="CHEBI:29105"/>
        <note>structural</note>
    </ligand>
</feature>
<feature type="binding site" evidence="1">
    <location>
        <begin position="136"/>
        <end position="137"/>
    </location>
    <ligand>
        <name>ATP</name>
        <dbReference type="ChEBI" id="CHEBI:30616"/>
    </ligand>
</feature>
<feature type="binding site" evidence="1">
    <location>
        <position position="150"/>
    </location>
    <ligand>
        <name>Zn(2+)</name>
        <dbReference type="ChEBI" id="CHEBI:29105"/>
        <note>structural</note>
    </ligand>
</feature>
<feature type="binding site" evidence="1">
    <location>
        <position position="153"/>
    </location>
    <ligand>
        <name>Zn(2+)</name>
        <dbReference type="ChEBI" id="CHEBI:29105"/>
        <note>structural</note>
    </ligand>
</feature>
<feature type="binding site" evidence="1">
    <location>
        <position position="160"/>
    </location>
    <ligand>
        <name>AMP</name>
        <dbReference type="ChEBI" id="CHEBI:456215"/>
    </ligand>
</feature>
<feature type="binding site" evidence="1">
    <location>
        <position position="171"/>
    </location>
    <ligand>
        <name>AMP</name>
        <dbReference type="ChEBI" id="CHEBI:456215"/>
    </ligand>
</feature>
<feature type="binding site" evidence="1">
    <location>
        <position position="199"/>
    </location>
    <ligand>
        <name>ATP</name>
        <dbReference type="ChEBI" id="CHEBI:30616"/>
    </ligand>
</feature>
<accession>Q6HPN7</accession>
<comment type="function">
    <text evidence="1">Catalyzes the reversible transfer of the terminal phosphate group between ATP and AMP. Plays an important role in cellular energy homeostasis and in adenine nucleotide metabolism.</text>
</comment>
<comment type="catalytic activity">
    <reaction evidence="1">
        <text>AMP + ATP = 2 ADP</text>
        <dbReference type="Rhea" id="RHEA:12973"/>
        <dbReference type="ChEBI" id="CHEBI:30616"/>
        <dbReference type="ChEBI" id="CHEBI:456215"/>
        <dbReference type="ChEBI" id="CHEBI:456216"/>
        <dbReference type="EC" id="2.7.4.3"/>
    </reaction>
</comment>
<comment type="pathway">
    <text evidence="1">Purine metabolism; AMP biosynthesis via salvage pathway; AMP from ADP: step 1/1.</text>
</comment>
<comment type="subunit">
    <text evidence="1">Monomer.</text>
</comment>
<comment type="subcellular location">
    <subcellularLocation>
        <location evidence="1">Cytoplasm</location>
    </subcellularLocation>
</comment>
<comment type="domain">
    <text evidence="1">Consists of three domains, a large central CORE domain and two small peripheral domains, NMPbind and LID, which undergo movements during catalysis. The LID domain closes over the site of phosphoryl transfer upon ATP binding. Assembling and dissambling the active center during each catalytic cycle provides an effective means to prevent ATP hydrolysis. Some bacteria have evolved a zinc-coordinating structure that stabilizes the LID domain.</text>
</comment>
<comment type="similarity">
    <text evidence="1">Belongs to the adenylate kinase family.</text>
</comment>
<organism>
    <name type="scientific">Bacillus thuringiensis subsp. konkukian (strain 97-27)</name>
    <dbReference type="NCBI Taxonomy" id="281309"/>
    <lineage>
        <taxon>Bacteria</taxon>
        <taxon>Bacillati</taxon>
        <taxon>Bacillota</taxon>
        <taxon>Bacilli</taxon>
        <taxon>Bacillales</taxon>
        <taxon>Bacillaceae</taxon>
        <taxon>Bacillus</taxon>
        <taxon>Bacillus cereus group</taxon>
    </lineage>
</organism>
<name>KAD_BACHK</name>
<reference key="1">
    <citation type="journal article" date="2006" name="J. Bacteriol.">
        <title>Pathogenomic sequence analysis of Bacillus cereus and Bacillus thuringiensis isolates closely related to Bacillus anthracis.</title>
        <authorList>
            <person name="Han C.S."/>
            <person name="Xie G."/>
            <person name="Challacombe J.F."/>
            <person name="Altherr M.R."/>
            <person name="Bhotika S.S."/>
            <person name="Bruce D."/>
            <person name="Campbell C.S."/>
            <person name="Campbell M.L."/>
            <person name="Chen J."/>
            <person name="Chertkov O."/>
            <person name="Cleland C."/>
            <person name="Dimitrijevic M."/>
            <person name="Doggett N.A."/>
            <person name="Fawcett J.J."/>
            <person name="Glavina T."/>
            <person name="Goodwin L.A."/>
            <person name="Hill K.K."/>
            <person name="Hitchcock P."/>
            <person name="Jackson P.J."/>
            <person name="Keim P."/>
            <person name="Kewalramani A.R."/>
            <person name="Longmire J."/>
            <person name="Lucas S."/>
            <person name="Malfatti S."/>
            <person name="McMurry K."/>
            <person name="Meincke L.J."/>
            <person name="Misra M."/>
            <person name="Moseman B.L."/>
            <person name="Mundt M."/>
            <person name="Munk A.C."/>
            <person name="Okinaka R.T."/>
            <person name="Parson-Quintana B."/>
            <person name="Reilly L.P."/>
            <person name="Richardson P."/>
            <person name="Robinson D.L."/>
            <person name="Rubin E."/>
            <person name="Saunders E."/>
            <person name="Tapia R."/>
            <person name="Tesmer J.G."/>
            <person name="Thayer N."/>
            <person name="Thompson L.S."/>
            <person name="Tice H."/>
            <person name="Ticknor L.O."/>
            <person name="Wills P.L."/>
            <person name="Brettin T.S."/>
            <person name="Gilna P."/>
        </authorList>
    </citation>
    <scope>NUCLEOTIDE SEQUENCE [LARGE SCALE GENOMIC DNA]</scope>
    <source>
        <strain>97-27</strain>
    </source>
</reference>
<evidence type="ECO:0000255" key="1">
    <source>
        <dbReference type="HAMAP-Rule" id="MF_00235"/>
    </source>
</evidence>
<sequence length="216" mass="23743">MNLILMGLPGAGKGTQAEQIVAKYNIPHISTGDMFRAAMKAETEMGLQAKSFIDKGALVPDEVTIGIVRERLSQEDCVRGFLLDGFPRTVAQASALEEIMKDLGKKIDYVLNINVDSGLLLKRLTGRRICKECGATYHLEFNAPAKADVCDKCGGELYQRSDDNEETVANRLDVNIKQTKPLLDFYEELGYLQSINGEQDINKVFADIDVLIGGLA</sequence>
<gene>
    <name evidence="1" type="primary">adk</name>
    <name type="ordered locus">BT9727_0127</name>
</gene>
<keyword id="KW-0067">ATP-binding</keyword>
<keyword id="KW-0963">Cytoplasm</keyword>
<keyword id="KW-0418">Kinase</keyword>
<keyword id="KW-0479">Metal-binding</keyword>
<keyword id="KW-0545">Nucleotide biosynthesis</keyword>
<keyword id="KW-0547">Nucleotide-binding</keyword>
<keyword id="KW-0808">Transferase</keyword>
<keyword id="KW-0862">Zinc</keyword>
<dbReference type="EC" id="2.7.4.3" evidence="1"/>
<dbReference type="EMBL" id="AE017355">
    <property type="protein sequence ID" value="AAT61439.1"/>
    <property type="molecule type" value="Genomic_DNA"/>
</dbReference>
<dbReference type="RefSeq" id="WP_001048992.1">
    <property type="nucleotide sequence ID" value="NC_005957.1"/>
</dbReference>
<dbReference type="RefSeq" id="YP_034483.1">
    <property type="nucleotide sequence ID" value="NC_005957.1"/>
</dbReference>
<dbReference type="SMR" id="Q6HPN7"/>
<dbReference type="KEGG" id="btk:BT9727_0127"/>
<dbReference type="PATRIC" id="fig|281309.8.peg.128"/>
<dbReference type="HOGENOM" id="CLU_032354_1_2_9"/>
<dbReference type="UniPathway" id="UPA00588">
    <property type="reaction ID" value="UER00649"/>
</dbReference>
<dbReference type="Proteomes" id="UP000001301">
    <property type="component" value="Chromosome"/>
</dbReference>
<dbReference type="GO" id="GO:0005737">
    <property type="term" value="C:cytoplasm"/>
    <property type="evidence" value="ECO:0007669"/>
    <property type="project" value="UniProtKB-SubCell"/>
</dbReference>
<dbReference type="GO" id="GO:0004017">
    <property type="term" value="F:adenylate kinase activity"/>
    <property type="evidence" value="ECO:0007669"/>
    <property type="project" value="UniProtKB-UniRule"/>
</dbReference>
<dbReference type="GO" id="GO:0005524">
    <property type="term" value="F:ATP binding"/>
    <property type="evidence" value="ECO:0007669"/>
    <property type="project" value="UniProtKB-UniRule"/>
</dbReference>
<dbReference type="GO" id="GO:0008270">
    <property type="term" value="F:zinc ion binding"/>
    <property type="evidence" value="ECO:0007669"/>
    <property type="project" value="UniProtKB-UniRule"/>
</dbReference>
<dbReference type="GO" id="GO:0044209">
    <property type="term" value="P:AMP salvage"/>
    <property type="evidence" value="ECO:0007669"/>
    <property type="project" value="UniProtKB-UniRule"/>
</dbReference>
<dbReference type="CDD" id="cd01428">
    <property type="entry name" value="ADK"/>
    <property type="match status" value="1"/>
</dbReference>
<dbReference type="FunFam" id="3.40.50.300:FF:000106">
    <property type="entry name" value="Adenylate kinase mitochondrial"/>
    <property type="match status" value="1"/>
</dbReference>
<dbReference type="Gene3D" id="3.40.50.300">
    <property type="entry name" value="P-loop containing nucleotide triphosphate hydrolases"/>
    <property type="match status" value="1"/>
</dbReference>
<dbReference type="HAMAP" id="MF_00235">
    <property type="entry name" value="Adenylate_kinase_Adk"/>
    <property type="match status" value="1"/>
</dbReference>
<dbReference type="InterPro" id="IPR006259">
    <property type="entry name" value="Adenyl_kin_sub"/>
</dbReference>
<dbReference type="InterPro" id="IPR000850">
    <property type="entry name" value="Adenylat/UMP-CMP_kin"/>
</dbReference>
<dbReference type="InterPro" id="IPR033690">
    <property type="entry name" value="Adenylat_kinase_CS"/>
</dbReference>
<dbReference type="InterPro" id="IPR007862">
    <property type="entry name" value="Adenylate_kinase_lid-dom"/>
</dbReference>
<dbReference type="InterPro" id="IPR027417">
    <property type="entry name" value="P-loop_NTPase"/>
</dbReference>
<dbReference type="NCBIfam" id="TIGR01351">
    <property type="entry name" value="adk"/>
    <property type="match status" value="1"/>
</dbReference>
<dbReference type="NCBIfam" id="NF001380">
    <property type="entry name" value="PRK00279.1-2"/>
    <property type="match status" value="1"/>
</dbReference>
<dbReference type="NCBIfam" id="NF001381">
    <property type="entry name" value="PRK00279.1-3"/>
    <property type="match status" value="1"/>
</dbReference>
<dbReference type="NCBIfam" id="NF011100">
    <property type="entry name" value="PRK14527.1"/>
    <property type="match status" value="1"/>
</dbReference>
<dbReference type="PANTHER" id="PTHR23359">
    <property type="entry name" value="NUCLEOTIDE KINASE"/>
    <property type="match status" value="1"/>
</dbReference>
<dbReference type="Pfam" id="PF00406">
    <property type="entry name" value="ADK"/>
    <property type="match status" value="1"/>
</dbReference>
<dbReference type="Pfam" id="PF05191">
    <property type="entry name" value="ADK_lid"/>
    <property type="match status" value="1"/>
</dbReference>
<dbReference type="PRINTS" id="PR00094">
    <property type="entry name" value="ADENYLTKNASE"/>
</dbReference>
<dbReference type="SUPFAM" id="SSF52540">
    <property type="entry name" value="P-loop containing nucleoside triphosphate hydrolases"/>
    <property type="match status" value="1"/>
</dbReference>
<dbReference type="PROSITE" id="PS00113">
    <property type="entry name" value="ADENYLATE_KINASE"/>
    <property type="match status" value="1"/>
</dbReference>
<protein>
    <recommendedName>
        <fullName evidence="1">Adenylate kinase</fullName>
        <shortName evidence="1">AK</shortName>
        <ecNumber evidence="1">2.7.4.3</ecNumber>
    </recommendedName>
    <alternativeName>
        <fullName evidence="1">ATP-AMP transphosphorylase</fullName>
    </alternativeName>
    <alternativeName>
        <fullName evidence="1">ATP:AMP phosphotransferase</fullName>
    </alternativeName>
    <alternativeName>
        <fullName evidence="1">Adenylate monophosphate kinase</fullName>
    </alternativeName>
</protein>
<proteinExistence type="inferred from homology"/>